<sequence length="255" mass="27309">MTMTTMPESLNSPVSGKAVFMEFGPPNQQMSPSPMSHGHYSMHCLHSAGHSQPDGAYSSASSFSRPLGYPYVNSVSSHASSPYISSVQSYPGSASLAQSRLEDPGADSEKSTVVEGGEVRFNGKGKKIRKPRTIYSSLQLQALNRRFQQTQYLALPERAELAASLGLTQTQVKIWFQNKRSKFKKLMKQGGAALEGSALANGRALSAGSPPVPPGWNPNSSSGKGSGSSAGSYVPSYTSWYPSAHQEAMQQPQLM</sequence>
<organism>
    <name type="scientific">Mus musculus</name>
    <name type="common">Mouse</name>
    <dbReference type="NCBI Taxonomy" id="10090"/>
    <lineage>
        <taxon>Eukaryota</taxon>
        <taxon>Metazoa</taxon>
        <taxon>Chordata</taxon>
        <taxon>Craniata</taxon>
        <taxon>Vertebrata</taxon>
        <taxon>Euteleostomi</taxon>
        <taxon>Mammalia</taxon>
        <taxon>Eutheria</taxon>
        <taxon>Euarchontoglires</taxon>
        <taxon>Glires</taxon>
        <taxon>Rodentia</taxon>
        <taxon>Myomorpha</taxon>
        <taxon>Muroidea</taxon>
        <taxon>Muridae</taxon>
        <taxon>Murinae</taxon>
        <taxon>Mus</taxon>
        <taxon>Mus</taxon>
    </lineage>
</organism>
<reference key="1">
    <citation type="journal article" date="1996" name="Genomics">
        <title>Sequence, organization, and transcription of the Dlx-1 and Dlx-2 locus.</title>
        <authorList>
            <person name="McGuinness T."/>
            <person name="Porteus M.H."/>
            <person name="Smiga S."/>
            <person name="Bulfone A."/>
            <person name="Kingsley C."/>
            <person name="Qiu M."/>
            <person name="Liu J.K."/>
            <person name="Long J.E."/>
            <person name="Xu D."/>
            <person name="Rubenstein J.L.R."/>
        </authorList>
    </citation>
    <scope>NUCLEOTIDE SEQUENCE [GENOMIC DNA / MRNA]</scope>
    <source>
        <strain>129</strain>
    </source>
</reference>
<reference key="2">
    <citation type="journal article" date="2004" name="Genome Res.">
        <title>The status, quality, and expansion of the NIH full-length cDNA project: the Mammalian Gene Collection (MGC).</title>
        <authorList>
            <consortium name="The MGC Project Team"/>
        </authorList>
    </citation>
    <scope>NUCLEOTIDE SEQUENCE [LARGE SCALE MRNA]</scope>
    <source>
        <strain>C57BL/6J</strain>
        <tissue>Brain</tissue>
    </source>
</reference>
<reference key="3">
    <citation type="journal article" date="1991" name="Nature">
        <title>A mouse gene related to Distal-less shows a restricted expression in the developing forebrain.</title>
        <authorList>
            <person name="Price M."/>
            <person name="Lemaistre M."/>
            <person name="Pischetola M."/>
            <person name="di Lauro R."/>
            <person name="Duboule D."/>
        </authorList>
    </citation>
    <scope>NUCLEOTIDE SEQUENCE [GENOMIC DNA] OF 98-255</scope>
    <scope>POSSIBLE FUNCTION</scope>
    <scope>TISSUE SPECIFICITY</scope>
    <scope>DEVELOPMENTAL STAGE</scope>
    <source>
        <tissue>Brain</tissue>
    </source>
</reference>
<reference key="4">
    <citation type="journal article" date="2011" name="Neuroscience">
        <title>Brn-3b inhibits generation of amacrine cells by binding to and negatively regulating DLX1/2 in developing retina.</title>
        <authorList>
            <person name="Feng L."/>
            <person name="Eisenstat D.D."/>
            <person name="Chiba S."/>
            <person name="Ishizaki Y."/>
            <person name="Gan L."/>
            <person name="Shibasaki K."/>
        </authorList>
    </citation>
    <scope>FUNCTION</scope>
    <scope>INTERACTION WITH POU4F2</scope>
    <scope>DEVELOPMENTAL STAGE</scope>
</reference>
<protein>
    <recommendedName>
        <fullName>Homeobox protein DLX-1</fullName>
    </recommendedName>
</protein>
<accession>Q64317</accession>
<gene>
    <name type="primary">Dlx1</name>
</gene>
<comment type="function">
    <text evidence="1 4 5">Plays a role as a transcriptional activator or repressor (PubMed:21875655). Inhibits several cytokine signaling pathways, such as TGFB1, activin-A/INHBA and BMP4 by interfering with the transcriptional stimulatory activity of transcription factors, such as MSX2, FAST2, SMAD2 and SMAD3 during hematopoietic cell differentiation (By similarity). Plays a role in terminal differentiation of interneurons, such as amacrine and bipolar cells in the developing retina (PubMed:21875655). Likely to play a regulatory role in the development of the ventral forebrain (PubMed:1676488). May play a role in craniofacial patterning and morphogenesis and may be involved in the early development of diencephalic subdivisions (PubMed:1676488).</text>
</comment>
<comment type="subunit">
    <text evidence="1 5">Interacts with SMAD4 (via homeobox DNA-binding domain) (By similarity). Interacts (via homeobox DNA-binding domain) with POU4F2; this interaction suppresses DLX1-mediated transcriptional activity in postnatal retina and enhances retinal ganglion cell (RGC) differentiation (PubMed:21875655).</text>
</comment>
<comment type="subcellular location">
    <subcellularLocation>
        <location evidence="1">Nucleus</location>
    </subcellularLocation>
</comment>
<comment type="tissue specificity">
    <text evidence="4">Expressed in a restricted region of the developing brain, within the diencephalon and the adjacent telencephalic regions.</text>
</comment>
<comment type="developmental stage">
    <text evidence="4 5">Expressed in developing retinal progenitor cells at 12 dpc (PubMed:21875655). Has a segmental expression in the developing forebrain (PubMed:1676488).</text>
</comment>
<comment type="domain">
    <text evidence="1">The homeobox DNA-binding domain is necessary for its nuclear localization, transcriptional and erythroid differentiation activities.</text>
</comment>
<comment type="similarity">
    <text evidence="6">Belongs to the distal-less homeobox family.</text>
</comment>
<dbReference type="EMBL" id="U51001">
    <property type="protein sequence ID" value="AAB40900.1"/>
    <property type="molecule type" value="mRNA"/>
</dbReference>
<dbReference type="EMBL" id="U51000">
    <property type="protein sequence ID" value="AAB40899.1"/>
    <property type="molecule type" value="Genomic_DNA"/>
</dbReference>
<dbReference type="EMBL" id="BC079609">
    <property type="protein sequence ID" value="AAH79609.1"/>
    <property type="molecule type" value="mRNA"/>
</dbReference>
<dbReference type="EMBL" id="X57552">
    <property type="protein sequence ID" value="CAB37647.1"/>
    <property type="molecule type" value="Genomic_DNA"/>
</dbReference>
<dbReference type="CCDS" id="CCDS16116.1"/>
<dbReference type="RefSeq" id="NP_001403914.1">
    <property type="nucleotide sequence ID" value="NM_001416985.1"/>
</dbReference>
<dbReference type="RefSeq" id="NP_001403915.1">
    <property type="nucleotide sequence ID" value="NM_001416986.1"/>
</dbReference>
<dbReference type="RefSeq" id="NP_001403916.1">
    <property type="nucleotide sequence ID" value="NM_001416987.1"/>
</dbReference>
<dbReference type="RefSeq" id="NP_034183.1">
    <property type="nucleotide sequence ID" value="NM_010053.3"/>
</dbReference>
<dbReference type="RefSeq" id="XP_006498734.1">
    <property type="nucleotide sequence ID" value="XM_006498671.3"/>
</dbReference>
<dbReference type="RefSeq" id="XP_006498735.1">
    <property type="nucleotide sequence ID" value="XM_006498672.3"/>
</dbReference>
<dbReference type="RefSeq" id="XP_006498736.1">
    <property type="nucleotide sequence ID" value="XM_006498673.3"/>
</dbReference>
<dbReference type="RefSeq" id="XP_017170794.1">
    <property type="nucleotide sequence ID" value="XM_017315305.1"/>
</dbReference>
<dbReference type="RefSeq" id="XP_017170796.1">
    <property type="nucleotide sequence ID" value="XM_017315307.1"/>
</dbReference>
<dbReference type="RefSeq" id="XP_017170800.1">
    <property type="nucleotide sequence ID" value="XM_017315311.1"/>
</dbReference>
<dbReference type="SMR" id="Q64317"/>
<dbReference type="BioGRID" id="199234">
    <property type="interactions" value="11"/>
</dbReference>
<dbReference type="FunCoup" id="Q64317">
    <property type="interactions" value="2860"/>
</dbReference>
<dbReference type="IntAct" id="Q64317">
    <property type="interactions" value="10"/>
</dbReference>
<dbReference type="STRING" id="10090.ENSMUSP00000042413"/>
<dbReference type="PhosphoSitePlus" id="Q64317"/>
<dbReference type="PaxDb" id="10090-ENSMUSP00000042413"/>
<dbReference type="PeptideAtlas" id="Q64317"/>
<dbReference type="ProteomicsDB" id="279725"/>
<dbReference type="Pumba" id="Q64317"/>
<dbReference type="ABCD" id="Q64317">
    <property type="antibodies" value="1 sequenced antibody"/>
</dbReference>
<dbReference type="Antibodypedia" id="33859">
    <property type="antibodies" value="371 antibodies from 34 providers"/>
</dbReference>
<dbReference type="DNASU" id="13390"/>
<dbReference type="Ensembl" id="ENSMUST00000037119.4">
    <property type="protein sequence ID" value="ENSMUSP00000042413.4"/>
    <property type="gene ID" value="ENSMUSG00000041911.4"/>
</dbReference>
<dbReference type="GeneID" id="13390"/>
<dbReference type="KEGG" id="mmu:13390"/>
<dbReference type="UCSC" id="uc008kau.1">
    <property type="organism name" value="mouse"/>
</dbReference>
<dbReference type="AGR" id="MGI:94901"/>
<dbReference type="CTD" id="1745"/>
<dbReference type="MGI" id="MGI:94901">
    <property type="gene designation" value="Dlx1"/>
</dbReference>
<dbReference type="VEuPathDB" id="HostDB:ENSMUSG00000041911"/>
<dbReference type="eggNOG" id="KOG0850">
    <property type="taxonomic scope" value="Eukaryota"/>
</dbReference>
<dbReference type="GeneTree" id="ENSGT00940000160029"/>
<dbReference type="HOGENOM" id="CLU_074733_2_0_1"/>
<dbReference type="InParanoid" id="Q64317"/>
<dbReference type="OMA" id="GPPVWNT"/>
<dbReference type="OrthoDB" id="6159439at2759"/>
<dbReference type="PhylomeDB" id="Q64317"/>
<dbReference type="TreeFam" id="TF315720"/>
<dbReference type="BioGRID-ORCS" id="13390">
    <property type="hits" value="0 hits in 78 CRISPR screens"/>
</dbReference>
<dbReference type="ChiTaRS" id="Dlx1">
    <property type="organism name" value="mouse"/>
</dbReference>
<dbReference type="PRO" id="PR:Q64317"/>
<dbReference type="Proteomes" id="UP000000589">
    <property type="component" value="Chromosome 2"/>
</dbReference>
<dbReference type="RNAct" id="Q64317">
    <property type="molecule type" value="protein"/>
</dbReference>
<dbReference type="Bgee" id="ENSMUSG00000041911">
    <property type="expression patterns" value="Expressed in medial ganglionic eminence and 183 other cell types or tissues"/>
</dbReference>
<dbReference type="ExpressionAtlas" id="Q64317">
    <property type="expression patterns" value="baseline and differential"/>
</dbReference>
<dbReference type="GO" id="GO:0005829">
    <property type="term" value="C:cytosol"/>
    <property type="evidence" value="ECO:0007669"/>
    <property type="project" value="Ensembl"/>
</dbReference>
<dbReference type="GO" id="GO:0005654">
    <property type="term" value="C:nucleoplasm"/>
    <property type="evidence" value="ECO:0007669"/>
    <property type="project" value="Ensembl"/>
</dbReference>
<dbReference type="GO" id="GO:0005634">
    <property type="term" value="C:nucleus"/>
    <property type="evidence" value="ECO:0000314"/>
    <property type="project" value="MGI"/>
</dbReference>
<dbReference type="GO" id="GO:0003682">
    <property type="term" value="F:chromatin binding"/>
    <property type="evidence" value="ECO:0000314"/>
    <property type="project" value="MGI"/>
</dbReference>
<dbReference type="GO" id="GO:0003677">
    <property type="term" value="F:DNA binding"/>
    <property type="evidence" value="ECO:0000314"/>
    <property type="project" value="MGI"/>
</dbReference>
<dbReference type="GO" id="GO:0000981">
    <property type="term" value="F:DNA-binding transcription factor activity, RNA polymerase II-specific"/>
    <property type="evidence" value="ECO:0000314"/>
    <property type="project" value="NTNU_SB"/>
</dbReference>
<dbReference type="GO" id="GO:0000977">
    <property type="term" value="F:RNA polymerase II transcription regulatory region sequence-specific DNA binding"/>
    <property type="evidence" value="ECO:0000314"/>
    <property type="project" value="NTNU_SB"/>
</dbReference>
<dbReference type="GO" id="GO:0071773">
    <property type="term" value="P:cellular response to BMP stimulus"/>
    <property type="evidence" value="ECO:0000250"/>
    <property type="project" value="UniProtKB"/>
</dbReference>
<dbReference type="GO" id="GO:0071560">
    <property type="term" value="P:cellular response to transforming growth factor beta stimulus"/>
    <property type="evidence" value="ECO:0000250"/>
    <property type="project" value="UniProtKB"/>
</dbReference>
<dbReference type="GO" id="GO:0021892">
    <property type="term" value="P:cerebral cortex GABAergic interneuron differentiation"/>
    <property type="evidence" value="ECO:0000316"/>
    <property type="project" value="MGI"/>
</dbReference>
<dbReference type="GO" id="GO:0021893">
    <property type="term" value="P:cerebral cortex GABAergic interneuron fate commitment"/>
    <property type="evidence" value="ECO:0000316"/>
    <property type="project" value="MGI"/>
</dbReference>
<dbReference type="GO" id="GO:0048706">
    <property type="term" value="P:embryonic skeletal system development"/>
    <property type="evidence" value="ECO:0000315"/>
    <property type="project" value="MGI"/>
</dbReference>
<dbReference type="GO" id="GO:0021879">
    <property type="term" value="P:forebrain neuron differentiation"/>
    <property type="evidence" value="ECO:0000316"/>
    <property type="project" value="MGI"/>
</dbReference>
<dbReference type="GO" id="GO:0097154">
    <property type="term" value="P:GABAergic neuron differentiation"/>
    <property type="evidence" value="ECO:0000316"/>
    <property type="project" value="MGI"/>
</dbReference>
<dbReference type="GO" id="GO:0021766">
    <property type="term" value="P:hippocampus development"/>
    <property type="evidence" value="ECO:0000316"/>
    <property type="project" value="MGI"/>
</dbReference>
<dbReference type="GO" id="GO:0030514">
    <property type="term" value="P:negative regulation of BMP signaling pathway"/>
    <property type="evidence" value="ECO:0000250"/>
    <property type="project" value="UniProtKB"/>
</dbReference>
<dbReference type="GO" id="GO:1903845">
    <property type="term" value="P:negative regulation of cellular response to transforming growth factor beta stimulus"/>
    <property type="evidence" value="ECO:0000250"/>
    <property type="project" value="UniProtKB"/>
</dbReference>
<dbReference type="GO" id="GO:0043524">
    <property type="term" value="P:negative regulation of neuron apoptotic process"/>
    <property type="evidence" value="ECO:0000315"/>
    <property type="project" value="MGI"/>
</dbReference>
<dbReference type="GO" id="GO:0045746">
    <property type="term" value="P:negative regulation of Notch signaling pathway"/>
    <property type="evidence" value="ECO:0000316"/>
    <property type="project" value="MGI"/>
</dbReference>
<dbReference type="GO" id="GO:0048715">
    <property type="term" value="P:negative regulation of oligodendrocyte differentiation"/>
    <property type="evidence" value="ECO:0000316"/>
    <property type="project" value="MGI"/>
</dbReference>
<dbReference type="GO" id="GO:0046533">
    <property type="term" value="P:negative regulation of photoreceptor cell differentiation"/>
    <property type="evidence" value="ECO:0000315"/>
    <property type="project" value="UniProtKB"/>
</dbReference>
<dbReference type="GO" id="GO:0000122">
    <property type="term" value="P:negative regulation of transcription by RNA polymerase II"/>
    <property type="evidence" value="ECO:0000316"/>
    <property type="project" value="MGI"/>
</dbReference>
<dbReference type="GO" id="GO:0014016">
    <property type="term" value="P:neuroblast differentiation"/>
    <property type="evidence" value="ECO:0000315"/>
    <property type="project" value="MGI"/>
</dbReference>
<dbReference type="GO" id="GO:0051402">
    <property type="term" value="P:neuron apoptotic process"/>
    <property type="evidence" value="ECO:0000315"/>
    <property type="project" value="MGI"/>
</dbReference>
<dbReference type="GO" id="GO:0007219">
    <property type="term" value="P:Notch signaling pathway"/>
    <property type="evidence" value="ECO:0000316"/>
    <property type="project" value="MGI"/>
</dbReference>
<dbReference type="GO" id="GO:0042475">
    <property type="term" value="P:odontogenesis of dentin-containing tooth"/>
    <property type="evidence" value="ECO:0000316"/>
    <property type="project" value="MGI"/>
</dbReference>
<dbReference type="GO" id="GO:0048709">
    <property type="term" value="P:oligodendrocyte differentiation"/>
    <property type="evidence" value="ECO:0000316"/>
    <property type="project" value="MGI"/>
</dbReference>
<dbReference type="GO" id="GO:1902871">
    <property type="term" value="P:positive regulation of amacrine cell differentiation"/>
    <property type="evidence" value="ECO:0000315"/>
    <property type="project" value="UniProtKB"/>
</dbReference>
<dbReference type="GO" id="GO:0045597">
    <property type="term" value="P:positive regulation of cell differentiation"/>
    <property type="evidence" value="ECO:0000315"/>
    <property type="project" value="UniProtKB"/>
</dbReference>
<dbReference type="GO" id="GO:0045944">
    <property type="term" value="P:positive regulation of transcription by RNA polymerase II"/>
    <property type="evidence" value="ECO:0000315"/>
    <property type="project" value="UniProtKB"/>
</dbReference>
<dbReference type="GO" id="GO:0009954">
    <property type="term" value="P:proximal/distal pattern formation"/>
    <property type="evidence" value="ECO:0000315"/>
    <property type="project" value="MGI"/>
</dbReference>
<dbReference type="GO" id="GO:0006357">
    <property type="term" value="P:regulation of transcription by RNA polymerase II"/>
    <property type="evidence" value="ECO:0000314"/>
    <property type="project" value="NTNU_SB"/>
</dbReference>
<dbReference type="GO" id="GO:0021544">
    <property type="term" value="P:subpallium development"/>
    <property type="evidence" value="ECO:0000316"/>
    <property type="project" value="MGI"/>
</dbReference>
<dbReference type="CDD" id="cd00086">
    <property type="entry name" value="homeodomain"/>
    <property type="match status" value="1"/>
</dbReference>
<dbReference type="FunFam" id="1.10.10.60:FF:000074">
    <property type="entry name" value="Distal-less homeobox 1"/>
    <property type="match status" value="1"/>
</dbReference>
<dbReference type="Gene3D" id="1.10.10.60">
    <property type="entry name" value="Homeodomain-like"/>
    <property type="match status" value="1"/>
</dbReference>
<dbReference type="InterPro" id="IPR050460">
    <property type="entry name" value="Distal-less_Homeobox_TF"/>
</dbReference>
<dbReference type="InterPro" id="IPR001356">
    <property type="entry name" value="HD"/>
</dbReference>
<dbReference type="InterPro" id="IPR020479">
    <property type="entry name" value="HD_metazoa"/>
</dbReference>
<dbReference type="InterPro" id="IPR017970">
    <property type="entry name" value="Homeobox_CS"/>
</dbReference>
<dbReference type="InterPro" id="IPR009057">
    <property type="entry name" value="Homeodomain-like_sf"/>
</dbReference>
<dbReference type="InterPro" id="IPR000047">
    <property type="entry name" value="HTH_motif"/>
</dbReference>
<dbReference type="PANTHER" id="PTHR24327">
    <property type="entry name" value="HOMEOBOX PROTEIN"/>
    <property type="match status" value="1"/>
</dbReference>
<dbReference type="PANTHER" id="PTHR24327:SF33">
    <property type="entry name" value="HOMEOBOX PROTEIN DLX-1"/>
    <property type="match status" value="1"/>
</dbReference>
<dbReference type="Pfam" id="PF00046">
    <property type="entry name" value="Homeodomain"/>
    <property type="match status" value="1"/>
</dbReference>
<dbReference type="PRINTS" id="PR00024">
    <property type="entry name" value="HOMEOBOX"/>
</dbReference>
<dbReference type="PRINTS" id="PR00031">
    <property type="entry name" value="HTHREPRESSR"/>
</dbReference>
<dbReference type="SMART" id="SM00389">
    <property type="entry name" value="HOX"/>
    <property type="match status" value="1"/>
</dbReference>
<dbReference type="SUPFAM" id="SSF46689">
    <property type="entry name" value="Homeodomain-like"/>
    <property type="match status" value="1"/>
</dbReference>
<dbReference type="PROSITE" id="PS00027">
    <property type="entry name" value="HOMEOBOX_1"/>
    <property type="match status" value="1"/>
</dbReference>
<dbReference type="PROSITE" id="PS50071">
    <property type="entry name" value="HOMEOBOX_2"/>
    <property type="match status" value="1"/>
</dbReference>
<evidence type="ECO:0000250" key="1">
    <source>
        <dbReference type="UniProtKB" id="P56177"/>
    </source>
</evidence>
<evidence type="ECO:0000255" key="2">
    <source>
        <dbReference type="PROSITE-ProRule" id="PRU00108"/>
    </source>
</evidence>
<evidence type="ECO:0000256" key="3">
    <source>
        <dbReference type="SAM" id="MobiDB-lite"/>
    </source>
</evidence>
<evidence type="ECO:0000269" key="4">
    <source>
    </source>
</evidence>
<evidence type="ECO:0000269" key="5">
    <source>
    </source>
</evidence>
<evidence type="ECO:0000305" key="6"/>
<keyword id="KW-0010">Activator</keyword>
<keyword id="KW-0217">Developmental protein</keyword>
<keyword id="KW-0221">Differentiation</keyword>
<keyword id="KW-0238">DNA-binding</keyword>
<keyword id="KW-0371">Homeobox</keyword>
<keyword id="KW-0539">Nucleus</keyword>
<keyword id="KW-1185">Reference proteome</keyword>
<keyword id="KW-0678">Repressor</keyword>
<keyword id="KW-0804">Transcription</keyword>
<keyword id="KW-0805">Transcription regulation</keyword>
<feature type="chain" id="PRO_0000049021" description="Homeobox protein DLX-1">
    <location>
        <begin position="1"/>
        <end position="255"/>
    </location>
</feature>
<feature type="DNA-binding region" description="Homeobox" evidence="2">
    <location>
        <begin position="128"/>
        <end position="187"/>
    </location>
</feature>
<feature type="region of interest" description="Disordered" evidence="3">
    <location>
        <begin position="1"/>
        <end position="38"/>
    </location>
</feature>
<feature type="region of interest" description="Disordered" evidence="3">
    <location>
        <begin position="95"/>
        <end position="118"/>
    </location>
</feature>
<feature type="region of interest" description="Disordered" evidence="3">
    <location>
        <begin position="204"/>
        <end position="233"/>
    </location>
</feature>
<feature type="compositionally biased region" description="Polar residues" evidence="3">
    <location>
        <begin position="1"/>
        <end position="14"/>
    </location>
</feature>
<feature type="compositionally biased region" description="Low complexity" evidence="3">
    <location>
        <begin position="25"/>
        <end position="36"/>
    </location>
</feature>
<feature type="compositionally biased region" description="Basic and acidic residues" evidence="3">
    <location>
        <begin position="100"/>
        <end position="112"/>
    </location>
</feature>
<feature type="compositionally biased region" description="Low complexity" evidence="3">
    <location>
        <begin position="217"/>
        <end position="232"/>
    </location>
</feature>
<feature type="sequence conflict" description="In Ref. 3." evidence="6" ref="3">
    <original>QSRLED</original>
    <variation>PEPPGG</variation>
    <location>
        <begin position="98"/>
        <end position="103"/>
    </location>
</feature>
<feature type="sequence conflict" description="In Ref. 3." evidence="6" ref="3">
    <original>G</original>
    <variation>GQ</variation>
    <location>
        <position position="123"/>
    </location>
</feature>
<name>DLX1_MOUSE</name>
<proteinExistence type="evidence at protein level"/>